<keyword id="KW-0010">Activator</keyword>
<keyword id="KW-0025">Alternative splicing</keyword>
<keyword id="KW-0238">DNA-binding</keyword>
<keyword id="KW-0539">Nucleus</keyword>
<keyword id="KW-0597">Phosphoprotein</keyword>
<keyword id="KW-1185">Reference proteome</keyword>
<keyword id="KW-0804">Transcription</keyword>
<keyword id="KW-0805">Transcription regulation</keyword>
<keyword id="KW-0832">Ubl conjugation</keyword>
<comment type="function">
    <text evidence="5 6 7 8 9">Transcription activator. Negatively regulates chlorophyll biosynthesis and seed germination in the dark, and lightinduced degradation of PIF1 relieves this negative regulation to promote photomorphogenesis. Binds to the G-box motif (5'-CACGTG-3') found in many light-regulated promoters. Promotes the expression of SOM, and thus modulates responses to abscisic acid (ABA) and gibberellic acid (GA).</text>
</comment>
<comment type="activity regulation">
    <text evidence="15">DNA-binding ability is inhibited by PCH1 and PCHL to negatively regulate the expressions of its target genes.</text>
</comment>
<comment type="subunit">
    <text evidence="4 5 8 10 12 14 15">Homodimer (PubMed:25944101). Interacts with the photoactivated conformer (Pfr) of phytochromes A and B, PHYA and PHYB. Also interacts with APRR1/TOC1. Binds to RGL2, RGA and FHY3 (via N-terminus). Associates to PTAC12/HMR/PAP5 which acts as a transcriptional coactivator (PubMed:25944101). Binds directly to PCH1 and PCHL; this interaction facilitates its association with phyB and its subsequent light-induced degradation (PubMed:32061894).</text>
</comment>
<comment type="interaction">
    <interactant intactId="EBI-630400">
        <id>Q8GZM7</id>
    </interactant>
    <interactant intactId="EBI-1803261">
        <id>Q8S307</id>
        <label>BZR1</label>
    </interactant>
    <organismsDiffer>false</organismsDiffer>
    <experiments>2</experiments>
</comment>
<comment type="interaction">
    <interactant intactId="EBI-630400">
        <id>Q8GZM7</id>
    </interactant>
    <interactant intactId="EBI-626001">
        <id>Q9FE22</id>
        <label>HFR1</label>
    </interactant>
    <organismsDiffer>false</organismsDiffer>
    <experiments>3</experiments>
</comment>
<comment type="interaction">
    <interactant intactId="EBI-630400">
        <id>Q8GZM7</id>
    </interactant>
    <interactant intactId="EBI-300727">
        <id>P14713</id>
        <label>PHYB</label>
    </interactant>
    <organismsDiffer>false</organismsDiffer>
    <experiments>3</experiments>
</comment>
<comment type="interaction">
    <interactant intactId="EBI-630400">
        <id>Q8GZM7</id>
    </interactant>
    <interactant intactId="EBI-630400">
        <id>Q8GZM7</id>
        <label>PIF1</label>
    </interactant>
    <organismsDiffer>false</organismsDiffer>
    <experiments>3</experiments>
</comment>
<comment type="interaction">
    <interactant intactId="EBI-630400">
        <id>Q8GZM7</id>
    </interactant>
    <interactant intactId="EBI-625701">
        <id>O80536</id>
        <label>PIF3</label>
    </interactant>
    <organismsDiffer>false</organismsDiffer>
    <experiments>6</experiments>
</comment>
<comment type="subcellular location">
    <subcellularLocation>
        <location evidence="1 5 6">Nucleus</location>
    </subcellularLocation>
</comment>
<comment type="alternative products">
    <event type="alternative splicing"/>
    <isoform>
        <id>Q8GZM7-1</id>
        <name>1</name>
        <sequence type="displayed"/>
    </isoform>
    <isoform>
        <id>Q8GZM7-2</id>
        <name>2</name>
        <sequence type="described" ref="VSP_036107"/>
    </isoform>
</comment>
<comment type="tissue specificity">
    <text evidence="3 13">Mainly expressed in leaves, stems and seedlings, and, to a lower extent, in fruits, flowers and roots.</text>
</comment>
<comment type="developmental stage">
    <text evidence="13">Accumulates progressively in maturating seeds to reach a peak in dry seeds (PubMed:23708772). Slightly induced upon seed imbibition (PubMed:23708772).</text>
</comment>
<comment type="induction">
    <text evidence="5 13 14">Repressed by red (R) and far red (FR) light treatments in a phyB- and phyA-dependent manner, and via a PTAC12/HMR/PAP5 regulated process (PubMed:15448264, PubMed:25944101). Down-regulated by abscisic acid (ABA) and auxin (IAA), but up-regulated by cold and heat (PubMed:23708772). Follows a free-running tenous circadian rhythm, with slightly higher levels during in the light phase (PubMed:23708772).</text>
</comment>
<comment type="PTM">
    <text evidence="6 8 11">Phosphorylated at Thr-10, Thr-197, Ser-202, Ser-464, Ser-465, Ser-466 and Ser-469 by CK2 (PubMed:21330376). Phosphorylated and ubiquitinated after an exposure to light (especially red and far-red), in a phytochrome-dependent manner. Modified proteins undergo a proteasome-dependent degradation. Its stability and degradation plays a central role in photomorphogenesis of seedlings.</text>
</comment>
<comment type="disruption phenotype">
    <text evidence="5 9">Plants overaccumulate free protochlorophyllide in the darkness and exhibit photooxidative damage (bleaching) in subsequent light, probably caused by the photosensitizing activity of this tetrapyrrole intermediate.</text>
</comment>
<comment type="miscellaneous">
    <molecule>Isoform 2</molecule>
    <text evidence="22">May be due to a competing acceptor splice site.</text>
</comment>
<comment type="sequence caution" evidence="22">
    <conflict type="erroneous gene model prediction">
        <sequence resource="EMBL-CDS" id="AAD24380"/>
    </conflict>
</comment>
<proteinExistence type="evidence at protein level"/>
<gene>
    <name evidence="19" type="primary">PIF1</name>
    <name evidence="16" type="synonym">BHLH15</name>
    <name evidence="18" type="synonym">EN101</name>
    <name evidence="17" type="synonym">PIL5</name>
    <name evidence="23" type="ordered locus">At2g20180</name>
    <name evidence="24" type="ORF">T2G17.2</name>
</gene>
<reference key="1">
    <citation type="journal article" date="2003" name="Mol. Biol. Evol.">
        <title>The basic helix-loop-helix transcription factor family in plants: a genome-wide study of protein structure and functional diversity.</title>
        <authorList>
            <person name="Heim M.A."/>
            <person name="Jakoby M."/>
            <person name="Werber M."/>
            <person name="Martin C."/>
            <person name="Weisshaar B."/>
            <person name="Bailey P.C."/>
        </authorList>
    </citation>
    <scope>NUCLEOTIDE SEQUENCE [MRNA] (ISOFORM 1)</scope>
    <scope>TISSUE SPECIFICITY</scope>
    <scope>GENE FAMILY</scope>
    <scope>NOMENCLATURE</scope>
    <source>
        <strain>cv. Columbia</strain>
        <tissue>Leaf</tissue>
    </source>
</reference>
<reference key="2">
    <citation type="journal article" date="2003" name="Plant Cell Physiol.">
        <title>A link between circadian-controlled bHLH factors and the APRR1/TOC1 quintet in Arabidopsis thaliana.</title>
        <authorList>
            <person name="Yamashino T."/>
            <person name="Matsushika A."/>
            <person name="Fujimori T."/>
            <person name="Sato S."/>
            <person name="Kato T."/>
            <person name="Tabata S."/>
            <person name="Mizuno T."/>
        </authorList>
    </citation>
    <scope>NUCLEOTIDE SEQUENCE [MRNA] (ISOFORM 1)</scope>
    <scope>INTERACTION WITH APRR1/TOC1</scope>
</reference>
<reference key="3">
    <citation type="journal article" date="1999" name="Nature">
        <title>Sequence and analysis of chromosome 2 of the plant Arabidopsis thaliana.</title>
        <authorList>
            <person name="Lin X."/>
            <person name="Kaul S."/>
            <person name="Rounsley S.D."/>
            <person name="Shea T.P."/>
            <person name="Benito M.-I."/>
            <person name="Town C.D."/>
            <person name="Fujii C.Y."/>
            <person name="Mason T.M."/>
            <person name="Bowman C.L."/>
            <person name="Barnstead M.E."/>
            <person name="Feldblyum T.V."/>
            <person name="Buell C.R."/>
            <person name="Ketchum K.A."/>
            <person name="Lee J.J."/>
            <person name="Ronning C.M."/>
            <person name="Koo H.L."/>
            <person name="Moffat K.S."/>
            <person name="Cronin L.A."/>
            <person name="Shen M."/>
            <person name="Pai G."/>
            <person name="Van Aken S."/>
            <person name="Umayam L."/>
            <person name="Tallon L.J."/>
            <person name="Gill J.E."/>
            <person name="Adams M.D."/>
            <person name="Carrera A.J."/>
            <person name="Creasy T.H."/>
            <person name="Goodman H.M."/>
            <person name="Somerville C.R."/>
            <person name="Copenhaver G.P."/>
            <person name="Preuss D."/>
            <person name="Nierman W.C."/>
            <person name="White O."/>
            <person name="Eisen J.A."/>
            <person name="Salzberg S.L."/>
            <person name="Fraser C.M."/>
            <person name="Venter J.C."/>
        </authorList>
    </citation>
    <scope>NUCLEOTIDE SEQUENCE [LARGE SCALE GENOMIC DNA]</scope>
    <source>
        <strain>cv. Columbia</strain>
    </source>
</reference>
<reference key="4">
    <citation type="journal article" date="2017" name="Plant J.">
        <title>Araport11: a complete reannotation of the Arabidopsis thaliana reference genome.</title>
        <authorList>
            <person name="Cheng C.Y."/>
            <person name="Krishnakumar V."/>
            <person name="Chan A.P."/>
            <person name="Thibaud-Nissen F."/>
            <person name="Schobel S."/>
            <person name="Town C.D."/>
        </authorList>
    </citation>
    <scope>GENOME REANNOTATION</scope>
    <source>
        <strain>cv. Columbia</strain>
    </source>
</reference>
<reference key="5">
    <citation type="submission" date="2006-07" db="EMBL/GenBank/DDBJ databases">
        <title>Large-scale analysis of RIKEN Arabidopsis full-length (RAFL) cDNAs.</title>
        <authorList>
            <person name="Totoki Y."/>
            <person name="Seki M."/>
            <person name="Ishida J."/>
            <person name="Nakajima M."/>
            <person name="Enju A."/>
            <person name="Kamiya A."/>
            <person name="Narusaka M."/>
            <person name="Shin-i T."/>
            <person name="Nakagawa M."/>
            <person name="Sakamoto N."/>
            <person name="Oishi K."/>
            <person name="Kohara Y."/>
            <person name="Kobayashi M."/>
            <person name="Toyoda A."/>
            <person name="Sakaki Y."/>
            <person name="Sakurai T."/>
            <person name="Iida K."/>
            <person name="Akiyama K."/>
            <person name="Satou M."/>
            <person name="Toyoda T."/>
            <person name="Konagaya A."/>
            <person name="Carninci P."/>
            <person name="Kawai J."/>
            <person name="Hayashizaki Y."/>
            <person name="Shinozaki K."/>
        </authorList>
    </citation>
    <scope>NUCLEOTIDE SEQUENCE [LARGE SCALE MRNA] (ISOFORM 2)</scope>
    <source>
        <strain>cv. Columbia</strain>
    </source>
</reference>
<reference key="6">
    <citation type="submission" date="2006-12" db="EMBL/GenBank/DDBJ databases">
        <title>Arabidopsis ORF clones.</title>
        <authorList>
            <person name="Bautista V.R."/>
            <person name="Kim C.J."/>
            <person name="Chen H."/>
            <person name="Wu S.Y."/>
            <person name="De Los Reyes C."/>
            <person name="Ecker J.R."/>
        </authorList>
    </citation>
    <scope>NUCLEOTIDE SEQUENCE [LARGE SCALE MRNA] (ISOFORM 2)</scope>
    <source>
        <strain>cv. Columbia</strain>
    </source>
</reference>
<reference key="7">
    <citation type="journal article" date="2003" name="Plant Cell">
        <title>The Arabidopsis basic/helix-loop-helix transcription factor family.</title>
        <authorList>
            <person name="Toledo-Ortiz G."/>
            <person name="Huq E."/>
            <person name="Quail P.H."/>
        </authorList>
    </citation>
    <scope>GENE FAMILY</scope>
</reference>
<reference key="8">
    <citation type="journal article" date="2003" name="Plant Cell">
        <title>Update on the basic helix-loop-helix transcription factor gene family in Arabidopsis thaliana.</title>
        <authorList>
            <person name="Bailey P.C."/>
            <person name="Martin C."/>
            <person name="Toledo-Ortiz G."/>
            <person name="Quail P.H."/>
            <person name="Huq E."/>
            <person name="Heim M.A."/>
            <person name="Jakoby M."/>
            <person name="Werber M."/>
            <person name="Weisshaar B."/>
        </authorList>
    </citation>
    <scope>GENE FAMILY</scope>
    <scope>NOMENCLATURE</scope>
</reference>
<reference key="9">
    <citation type="journal article" date="2004" name="Science">
        <title>Phytochrome-interacting factor 1 is a critical bHLH regulator of chlorophyll biosynthesis.</title>
        <authorList>
            <person name="Huq E."/>
            <person name="Al-Sady B."/>
            <person name="Hudson M."/>
            <person name="Kim C."/>
            <person name="Apel K."/>
            <person name="Quail P.H."/>
        </authorList>
    </citation>
    <scope>FUNCTION</scope>
    <scope>DISRUPTION PHENOTYPE</scope>
    <scope>SUBCELLULAR LOCATION</scope>
    <scope>INDUCTION BY RED AND FAR-RED LIGHTS</scope>
    <scope>INTERACTION WITH PHYA AND PHYB</scope>
</reference>
<reference key="10">
    <citation type="journal article" date="2005" name="Plant J.">
        <title>PIF1 is regulated by light-mediated degradation through the ubiquitin-26S proteasome pathway to optimize photomorphogenesis of seedlings in Arabidopsis.</title>
        <authorList>
            <person name="Shen H."/>
            <person name="Moon J."/>
            <person name="Huq E."/>
        </authorList>
    </citation>
    <scope>FUNCTION</scope>
    <scope>UBIQUITINATION</scope>
    <scope>SUBCELLULAR LOCATION</scope>
</reference>
<reference key="11">
    <citation type="journal article" date="2008" name="Plant Cell">
        <title>SOMNUS, a CCCH-type zinc finger protein in Arabidopsis, negatively regulates light-dependent seed germination downstream of PIL5.</title>
        <authorList>
            <person name="Kim D.H."/>
            <person name="Yamaguchi S."/>
            <person name="Lim S."/>
            <person name="Oh E."/>
            <person name="Park J."/>
            <person name="Hanada A."/>
            <person name="Kamiya Y."/>
            <person name="Choi G."/>
        </authorList>
    </citation>
    <scope>FUNCTION</scope>
</reference>
<reference key="12">
    <citation type="journal article" date="2008" name="Proc. Natl. Acad. Sci. U.S.A.">
        <title>PIF1 directly and indirectly regulates chlorophyll biosynthesis to optimize the greening process in Arabidopsis.</title>
        <authorList>
            <person name="Moon J."/>
            <person name="Zhu L."/>
            <person name="Shen H."/>
            <person name="Huq E."/>
        </authorList>
    </citation>
    <scope>FUNCTION</scope>
    <scope>DISRUPTION PHENOTYPE</scope>
</reference>
<reference key="13">
    <citation type="journal article" date="2008" name="Plant Cell">
        <title>Light-induced phosphorylation and degradation of the negative regulator PHYTOCHROME-INTERACTING FACTOR1 from Arabidopsis depend upon its direct physical interactions with photoactivated phytochromes.</title>
        <authorList>
            <person name="Shen H."/>
            <person name="Zhu L."/>
            <person name="Castillon A."/>
            <person name="Majee M."/>
            <person name="Downie B."/>
            <person name="Huq E."/>
        </authorList>
    </citation>
    <scope>FUNCTION</scope>
    <scope>MUTAGENESIS OF 1-MET--VAL-50; GLU-41; LEU-42; TRP-44; GLY-47; 85-PHE--LEU-95; LEU-95; 118-ALA--GLY-160; SER-123; ASN-144; PHE-148; GLY-153; PHE-155 AND GLY-160</scope>
    <scope>INTERACTION WITH PHYA AND PHYB</scope>
    <scope>PHOSPHORYLATION</scope>
    <scope>UBIQUITINATION</scope>
</reference>
<reference key="14">
    <citation type="journal article" date="2010" name="Mol. Biol. Evol.">
        <title>Transcriptional diversification and functional conservation between DELLA proteins in Arabidopsis.</title>
        <authorList>
            <person name="Gallego-Bartolome J."/>
            <person name="Minguet E.G."/>
            <person name="Marin J.A."/>
            <person name="Prat S."/>
            <person name="Blazquez M.A."/>
            <person name="Alabadi D."/>
        </authorList>
    </citation>
    <scope>INTERACTION WITH RGL2 AND RGA</scope>
    <source>
        <strain>cv. Landsberg erecta</strain>
    </source>
</reference>
<reference key="15">
    <citation type="journal article" date="2011" name="J. Biol. Chem.">
        <title>Phosphorylation by CK2 enhances the rapid light-induced degradation of phytochrome interacting factor 1 in Arabidopsis.</title>
        <authorList>
            <person name="Bu Q."/>
            <person name="Zhu L."/>
            <person name="Dennis M.D."/>
            <person name="Yu L."/>
            <person name="Lu S.X."/>
            <person name="Person M.D."/>
            <person name="Tobin E.M."/>
            <person name="Browning K.S."/>
            <person name="Huq E."/>
        </authorList>
    </citation>
    <scope>PHOSPHORYLATION AT THR-10; THR-197; SER-202; SER-464; SER-465; SER-466 AND SER-469</scope>
    <scope>UBIQUITINATION</scope>
    <scope>MUTAGENESIS OF THR-10; THR-197; SER-202; SER-464; SER-465; SER-466 AND SER-469</scope>
</reference>
<reference key="16">
    <citation type="journal article" date="2012" name="Plant Cell">
        <title>Transposase-derived proteins FHY3/FAR1 interact with PHYTOCHROME-INTERACTING FACTOR1 to regulate chlorophyll biosynthesis by modulating HEMB1 during deetiolation in Arabidopsis.</title>
        <authorList>
            <person name="Tang W."/>
            <person name="Wang W."/>
            <person name="Chen D."/>
            <person name="Ji Q."/>
            <person name="Jing Y."/>
            <person name="Wang H."/>
            <person name="Lin R."/>
        </authorList>
    </citation>
    <scope>INTERACTION WITH FHY3</scope>
</reference>
<reference key="17">
    <citation type="journal article" date="2013" name="Mol. Cells">
        <title>Phytochrome-interacting factors have both shared and distinct biological roles.</title>
        <authorList>
            <person name="Jeong J."/>
            <person name="Choi G."/>
        </authorList>
    </citation>
    <scope>TISSUE SPECIFICITY</scope>
    <scope>DEVELOPMENTAL STAGE</scope>
    <scope>INDUCTION BY COLD; HEAT; ABSCISIC ACID AND AUXIN</scope>
    <scope>GENE FAMILY</scope>
    <scope>NOMENCLATURE</scope>
    <scope>REVIEW</scope>
</reference>
<reference key="18">
    <citation type="journal article" date="2015" name="Plant Cell">
        <title>HEMERA couples the proteolysis and transcriptional activity of PHYTOCHROME INTERACTING FACTORs in Arabidopsis photomorphogenesis.</title>
        <authorList>
            <person name="Qiu Y."/>
            <person name="Li M."/>
            <person name="Pasoreck E.K."/>
            <person name="Long L."/>
            <person name="Shi Y."/>
            <person name="Galvao R.M."/>
            <person name="Chou C.L."/>
            <person name="Wang H."/>
            <person name="Sun A.Y."/>
            <person name="Zhang Y.C."/>
            <person name="Jiang A."/>
            <person name="Chen M."/>
        </authorList>
    </citation>
    <scope>SUBUNIT</scope>
    <scope>INTERACTION WITH PTAC12/HMR/PAP5</scope>
    <scope>REPRESSION BY PTAC12/HMR/PAP5</scope>
    <source>
        <strain>cv. Columbia</strain>
    </source>
</reference>
<reference key="19">
    <citation type="journal article" date="2020" name="Mol. Plant">
        <title>PCH1 and PCHL directly interact with PIF1, promote its degradation, and inhibit its transcriptional function during photomorphogenesis.</title>
        <authorList>
            <person name="Cheng M.-C."/>
            <person name="Enderle B."/>
            <person name="Kathare P.K."/>
            <person name="Islam R."/>
            <person name="Hiltbrunner A."/>
            <person name="Huq E."/>
        </authorList>
    </citation>
    <scope>INTERACTION WITH PCH1 AND PCHL</scope>
    <scope>ACTIVITY REGULATION</scope>
    <source>
        <strain>cv. Columbia</strain>
    </source>
</reference>
<feature type="chain" id="PRO_0000358829" description="Transcription factor PIF1">
    <location>
        <begin position="1"/>
        <end position="478"/>
    </location>
</feature>
<feature type="domain" description="bHLH" evidence="1">
    <location>
        <begin position="284"/>
        <end position="333"/>
    </location>
</feature>
<feature type="region of interest" description="Disordered" evidence="2">
    <location>
        <begin position="56"/>
        <end position="80"/>
    </location>
</feature>
<feature type="region of interest" description="Disordered" evidence="2">
    <location>
        <begin position="122"/>
        <end position="144"/>
    </location>
</feature>
<feature type="region of interest" description="Disordered" evidence="2">
    <location>
        <begin position="172"/>
        <end position="210"/>
    </location>
</feature>
<feature type="region of interest" description="Disordered" evidence="2">
    <location>
        <begin position="230"/>
        <end position="294"/>
    </location>
</feature>
<feature type="region of interest" description="Disordered" evidence="2">
    <location>
        <begin position="391"/>
        <end position="478"/>
    </location>
</feature>
<feature type="compositionally biased region" description="Low complexity" evidence="2">
    <location>
        <begin position="69"/>
        <end position="80"/>
    </location>
</feature>
<feature type="compositionally biased region" description="Low complexity" evidence="2">
    <location>
        <begin position="179"/>
        <end position="189"/>
    </location>
</feature>
<feature type="compositionally biased region" description="Basic and acidic residues" evidence="2">
    <location>
        <begin position="238"/>
        <end position="272"/>
    </location>
</feature>
<feature type="compositionally biased region" description="Basic and acidic residues" evidence="2">
    <location>
        <begin position="284"/>
        <end position="294"/>
    </location>
</feature>
<feature type="compositionally biased region" description="Polar residues" evidence="2">
    <location>
        <begin position="415"/>
        <end position="426"/>
    </location>
</feature>
<feature type="compositionally biased region" description="Basic and acidic residues" evidence="2">
    <location>
        <begin position="465"/>
        <end position="478"/>
    </location>
</feature>
<feature type="site" description="Pfr PHYB binding">
    <location>
        <position position="47"/>
    </location>
</feature>
<feature type="site" description="Pfr PHYA binding">
    <location>
        <position position="95"/>
    </location>
</feature>
<feature type="site" description="Pfr PHYA binding">
    <location>
        <position position="144"/>
    </location>
</feature>
<feature type="modified residue" description="Phosphothreonine; by CK2" evidence="11">
    <location>
        <position position="10"/>
    </location>
</feature>
<feature type="modified residue" description="Phosphothreonine; by CK2" evidence="11">
    <location>
        <position position="197"/>
    </location>
</feature>
<feature type="modified residue" description="Phosphoserine; by CK2" evidence="11">
    <location>
        <position position="202"/>
    </location>
</feature>
<feature type="modified residue" description="Phosphoserine; by CK2" evidence="11">
    <location>
        <position position="464"/>
    </location>
</feature>
<feature type="modified residue" description="Phosphoserine; by CK2" evidence="11">
    <location>
        <position position="465"/>
    </location>
</feature>
<feature type="modified residue" description="Phosphoserine; by CK2" evidence="11">
    <location>
        <position position="466"/>
    </location>
</feature>
<feature type="modified residue" description="Phosphoserine; by CK2" evidence="11">
    <location>
        <position position="469"/>
    </location>
</feature>
<feature type="splice variant" id="VSP_036107" description="In isoform 2." evidence="20 21">
    <location>
        <begin position="1"/>
        <end position="71"/>
    </location>
</feature>
<feature type="mutagenesis site" description="Normal interaction with PHYA (Pfr form)." evidence="8">
    <location>
        <begin position="1"/>
        <end position="50"/>
    </location>
</feature>
<feature type="mutagenesis site" description="Loss of phosphorylation by CK2." evidence="11">
    <original>T</original>
    <variation>A</variation>
    <location>
        <position position="10"/>
    </location>
</feature>
<feature type="mutagenesis site" description="Loss of interaction with PHYB (Pfr form)." evidence="8">
    <original>E</original>
    <variation>A</variation>
    <location>
        <position position="41"/>
    </location>
</feature>
<feature type="mutagenesis site" description="Loss of interaction with PHYB (Pfr form)." evidence="8">
    <original>L</original>
    <variation>A</variation>
    <location>
        <position position="42"/>
    </location>
</feature>
<feature type="mutagenesis site" description="Reduced interaction with PHYB (Pfr form)." evidence="8">
    <original>W</original>
    <variation>A</variation>
    <location>
        <position position="44"/>
    </location>
</feature>
<feature type="mutagenesis site" description="Loss of interaction with PHYB (Pfr form)." evidence="8">
    <original>G</original>
    <variation>A</variation>
    <location>
        <position position="47"/>
    </location>
</feature>
<feature type="mutagenesis site" description="Reduced interaction with PHYA (Pfr form)." evidence="8">
    <location>
        <begin position="85"/>
        <end position="95"/>
    </location>
</feature>
<feature type="mutagenesis site" description="Reduced interaction with PHYA (Pfr form). Reduced interaction with PHYA (Pfr form); when associated with A-123; A-153; or A-160. Loss of interaction with PHYA (Pfr form); when associated with A-144." evidence="8">
    <original>L</original>
    <variation>A</variation>
    <location>
        <position position="95"/>
    </location>
</feature>
<feature type="mutagenesis site" description="Reduced interaction with PHYA (Pfr form)." evidence="8">
    <location>
        <begin position="118"/>
        <end position="160"/>
    </location>
</feature>
<feature type="mutagenesis site" description="Reduced interaction with PHYA (Pfr form); when associated with A-95." evidence="8">
    <original>S</original>
    <variation>A</variation>
    <location>
        <position position="123"/>
    </location>
</feature>
<feature type="mutagenesis site" description="Loss of interaction with PHYA (Pfr form); when associated with A-95." evidence="8">
    <original>N</original>
    <variation>A</variation>
    <location>
        <position position="144"/>
    </location>
</feature>
<feature type="mutagenesis site" description="Normal interaction with PHYA (Pfr form)." evidence="8">
    <original>F</original>
    <variation>A</variation>
    <location>
        <position position="148"/>
    </location>
</feature>
<feature type="mutagenesis site" description="Reduced interaction with PHYA (Pfr form); when associated with A-95." evidence="8">
    <original>G</original>
    <variation>A</variation>
    <location>
        <position position="153"/>
    </location>
</feature>
<feature type="mutagenesis site" description="Normal interaction with PHYA (Pfr form)." evidence="8">
    <original>F</original>
    <variation>A</variation>
    <location>
        <position position="155"/>
    </location>
</feature>
<feature type="mutagenesis site" description="Reduced interaction with PHYA (Pfr form); when associated with A-95." evidence="8">
    <original>G</original>
    <variation>A</variation>
    <location>
        <position position="160"/>
    </location>
</feature>
<feature type="mutagenesis site" description="Loss of phosphorylation by CK2." evidence="11">
    <original>T</original>
    <variation>A</variation>
    <location>
        <position position="197"/>
    </location>
</feature>
<feature type="mutagenesis site" description="Loss of phosphorylation by CK2." evidence="11">
    <original>S</original>
    <variation>A</variation>
    <location>
        <position position="202"/>
    </location>
</feature>
<feature type="mutagenesis site" description="Loss of phosphorylation by CK2." evidence="11">
    <original>S</original>
    <variation>A</variation>
    <location>
        <position position="464"/>
    </location>
</feature>
<feature type="mutagenesis site" description="Loss of phosphorylation by CK2." evidence="11">
    <original>S</original>
    <variation>A</variation>
    <location>
        <position position="465"/>
    </location>
</feature>
<feature type="mutagenesis site" description="Loss of phosphorylation by CK2." evidence="11">
    <original>S</original>
    <variation>A</variation>
    <location>
        <position position="466"/>
    </location>
</feature>
<feature type="mutagenesis site" description="Loss of phosphorylation by CK2." evidence="11">
    <original>S</original>
    <variation>A</variation>
    <location>
        <position position="469"/>
    </location>
</feature>
<feature type="sequence conflict" description="In Ref. 5; BAF00716." evidence="22" ref="5">
    <original>D</original>
    <variation>G</variation>
    <location>
        <position position="102"/>
    </location>
</feature>
<dbReference type="EMBL" id="AF488560">
    <property type="protein sequence ID" value="AAN78308.1"/>
    <property type="molecule type" value="mRNA"/>
</dbReference>
<dbReference type="EMBL" id="AB103113">
    <property type="protein sequence ID" value="BAC56979.1"/>
    <property type="molecule type" value="Transcribed_RNA"/>
</dbReference>
<dbReference type="EMBL" id="AC006081">
    <property type="protein sequence ID" value="AAD24380.1"/>
    <property type="status" value="ALT_SEQ"/>
    <property type="molecule type" value="Genomic_DNA"/>
</dbReference>
<dbReference type="EMBL" id="CP002685">
    <property type="protein sequence ID" value="AEC06977.1"/>
    <property type="molecule type" value="Genomic_DNA"/>
</dbReference>
<dbReference type="EMBL" id="CP002685">
    <property type="protein sequence ID" value="AEC06978.1"/>
    <property type="molecule type" value="Genomic_DNA"/>
</dbReference>
<dbReference type="EMBL" id="CP002685">
    <property type="protein sequence ID" value="AEC06979.1"/>
    <property type="molecule type" value="Genomic_DNA"/>
</dbReference>
<dbReference type="EMBL" id="CP002685">
    <property type="protein sequence ID" value="ANM61700.1"/>
    <property type="molecule type" value="Genomic_DNA"/>
</dbReference>
<dbReference type="EMBL" id="CP002685">
    <property type="protein sequence ID" value="ANM61701.1"/>
    <property type="molecule type" value="Genomic_DNA"/>
</dbReference>
<dbReference type="EMBL" id="CP002685">
    <property type="protein sequence ID" value="ANM61702.1"/>
    <property type="molecule type" value="Genomic_DNA"/>
</dbReference>
<dbReference type="EMBL" id="CP002685">
    <property type="protein sequence ID" value="ANM61703.1"/>
    <property type="molecule type" value="Genomic_DNA"/>
</dbReference>
<dbReference type="EMBL" id="AK228820">
    <property type="protein sequence ID" value="BAF00716.1"/>
    <property type="molecule type" value="mRNA"/>
</dbReference>
<dbReference type="EMBL" id="BT029775">
    <property type="protein sequence ID" value="ABM06045.1"/>
    <property type="molecule type" value="mRNA"/>
</dbReference>
<dbReference type="PIR" id="A84586">
    <property type="entry name" value="A84586"/>
</dbReference>
<dbReference type="RefSeq" id="NP_001189559.1">
    <molecule id="Q8GZM7-1"/>
    <property type="nucleotide sequence ID" value="NM_001202630.2"/>
</dbReference>
<dbReference type="RefSeq" id="NP_001318252.1">
    <molecule id="Q8GZM7-1"/>
    <property type="nucleotide sequence ID" value="NM_001335663.1"/>
</dbReference>
<dbReference type="RefSeq" id="NP_001323902.1">
    <molecule id="Q8GZM7-1"/>
    <property type="nucleotide sequence ID" value="NM_001335664.1"/>
</dbReference>
<dbReference type="RefSeq" id="NP_001323903.1">
    <molecule id="Q8GZM7-2"/>
    <property type="nucleotide sequence ID" value="NM_001335665.1"/>
</dbReference>
<dbReference type="RefSeq" id="NP_001323904.1">
    <molecule id="Q8GZM7-1"/>
    <property type="nucleotide sequence ID" value="NM_001335666.1"/>
</dbReference>
<dbReference type="RefSeq" id="NP_001323905.1">
    <molecule id="Q8GZM7-2"/>
    <property type="nucleotide sequence ID" value="NM_001335667.1"/>
</dbReference>
<dbReference type="RefSeq" id="NP_849996.1">
    <molecule id="Q8GZM7-2"/>
    <property type="nucleotide sequence ID" value="NM_179665.3"/>
</dbReference>
<dbReference type="SMR" id="Q8GZM7"/>
<dbReference type="BioGRID" id="1892">
    <property type="interactions" value="24"/>
</dbReference>
<dbReference type="DIP" id="DIP-61853N"/>
<dbReference type="FunCoup" id="Q8GZM7">
    <property type="interactions" value="104"/>
</dbReference>
<dbReference type="IntAct" id="Q8GZM7">
    <property type="interactions" value="10"/>
</dbReference>
<dbReference type="STRING" id="3702.Q8GZM7"/>
<dbReference type="GlyGen" id="Q8GZM7">
    <property type="glycosylation" value="1 site"/>
</dbReference>
<dbReference type="iPTMnet" id="Q8GZM7"/>
<dbReference type="PaxDb" id="3702-AT2G20180.2"/>
<dbReference type="EnsemblPlants" id="AT2G20180.1">
    <molecule id="Q8GZM7-2"/>
    <property type="protein sequence ID" value="AT2G20180.1"/>
    <property type="gene ID" value="AT2G20180"/>
</dbReference>
<dbReference type="EnsemblPlants" id="AT2G20180.2">
    <molecule id="Q8GZM7-1"/>
    <property type="protein sequence ID" value="AT2G20180.2"/>
    <property type="gene ID" value="AT2G20180"/>
</dbReference>
<dbReference type="EnsemblPlants" id="AT2G20180.3">
    <molecule id="Q8GZM7-1"/>
    <property type="protein sequence ID" value="AT2G20180.3"/>
    <property type="gene ID" value="AT2G20180"/>
</dbReference>
<dbReference type="EnsemblPlants" id="AT2G20180.4">
    <molecule id="Q8GZM7-1"/>
    <property type="protein sequence ID" value="AT2G20180.4"/>
    <property type="gene ID" value="AT2G20180"/>
</dbReference>
<dbReference type="EnsemblPlants" id="AT2G20180.5">
    <molecule id="Q8GZM7-2"/>
    <property type="protein sequence ID" value="AT2G20180.5"/>
    <property type="gene ID" value="AT2G20180"/>
</dbReference>
<dbReference type="EnsemblPlants" id="AT2G20180.6">
    <molecule id="Q8GZM7-1"/>
    <property type="protein sequence ID" value="AT2G20180.6"/>
    <property type="gene ID" value="AT2G20180"/>
</dbReference>
<dbReference type="EnsemblPlants" id="AT2G20180.7">
    <molecule id="Q8GZM7-2"/>
    <property type="protein sequence ID" value="AT2G20180.7"/>
    <property type="gene ID" value="AT2G20180"/>
</dbReference>
<dbReference type="GeneID" id="816538"/>
<dbReference type="Gramene" id="AT2G20180.1">
    <molecule id="Q8GZM7-2"/>
    <property type="protein sequence ID" value="AT2G20180.1"/>
    <property type="gene ID" value="AT2G20180"/>
</dbReference>
<dbReference type="Gramene" id="AT2G20180.2">
    <molecule id="Q8GZM7-1"/>
    <property type="protein sequence ID" value="AT2G20180.2"/>
    <property type="gene ID" value="AT2G20180"/>
</dbReference>
<dbReference type="Gramene" id="AT2G20180.3">
    <molecule id="Q8GZM7-1"/>
    <property type="protein sequence ID" value="AT2G20180.3"/>
    <property type="gene ID" value="AT2G20180"/>
</dbReference>
<dbReference type="Gramene" id="AT2G20180.4">
    <molecule id="Q8GZM7-1"/>
    <property type="protein sequence ID" value="AT2G20180.4"/>
    <property type="gene ID" value="AT2G20180"/>
</dbReference>
<dbReference type="Gramene" id="AT2G20180.5">
    <molecule id="Q8GZM7-2"/>
    <property type="protein sequence ID" value="AT2G20180.5"/>
    <property type="gene ID" value="AT2G20180"/>
</dbReference>
<dbReference type="Gramene" id="AT2G20180.6">
    <molecule id="Q8GZM7-1"/>
    <property type="protein sequence ID" value="AT2G20180.6"/>
    <property type="gene ID" value="AT2G20180"/>
</dbReference>
<dbReference type="Gramene" id="AT2G20180.7">
    <molecule id="Q8GZM7-2"/>
    <property type="protein sequence ID" value="AT2G20180.7"/>
    <property type="gene ID" value="AT2G20180"/>
</dbReference>
<dbReference type="KEGG" id="ath:AT2G20180"/>
<dbReference type="Araport" id="AT2G20180"/>
<dbReference type="TAIR" id="AT2G20180">
    <property type="gene designation" value="PIL5"/>
</dbReference>
<dbReference type="eggNOG" id="ENOG502QR6A">
    <property type="taxonomic scope" value="Eukaryota"/>
</dbReference>
<dbReference type="InParanoid" id="Q8GZM7"/>
<dbReference type="OMA" id="TECHSED"/>
<dbReference type="PhylomeDB" id="Q8GZM7"/>
<dbReference type="PRO" id="PR:Q8GZM7"/>
<dbReference type="Proteomes" id="UP000006548">
    <property type="component" value="Chromosome 2"/>
</dbReference>
<dbReference type="ExpressionAtlas" id="Q8GZM7">
    <property type="expression patterns" value="baseline and differential"/>
</dbReference>
<dbReference type="GO" id="GO:0005634">
    <property type="term" value="C:nucleus"/>
    <property type="evidence" value="ECO:0000314"/>
    <property type="project" value="TAIR"/>
</dbReference>
<dbReference type="GO" id="GO:0003677">
    <property type="term" value="F:DNA binding"/>
    <property type="evidence" value="ECO:0000314"/>
    <property type="project" value="TAIR"/>
</dbReference>
<dbReference type="GO" id="GO:0003700">
    <property type="term" value="F:DNA-binding transcription factor activity"/>
    <property type="evidence" value="ECO:0000314"/>
    <property type="project" value="TAIR"/>
</dbReference>
<dbReference type="GO" id="GO:0042802">
    <property type="term" value="F:identical protein binding"/>
    <property type="evidence" value="ECO:0000353"/>
    <property type="project" value="IntAct"/>
</dbReference>
<dbReference type="GO" id="GO:0010313">
    <property type="term" value="F:phytochrome binding"/>
    <property type="evidence" value="ECO:0000314"/>
    <property type="project" value="TAIR"/>
</dbReference>
<dbReference type="GO" id="GO:0046983">
    <property type="term" value="F:protein dimerization activity"/>
    <property type="evidence" value="ECO:0007669"/>
    <property type="project" value="InterPro"/>
</dbReference>
<dbReference type="GO" id="GO:0015995">
    <property type="term" value="P:chlorophyll biosynthetic process"/>
    <property type="evidence" value="ECO:0000315"/>
    <property type="project" value="TAIR"/>
</dbReference>
<dbReference type="GO" id="GO:0009740">
    <property type="term" value="P:gibberellic acid mediated signaling pathway"/>
    <property type="evidence" value="ECO:0000315"/>
    <property type="project" value="TAIR"/>
</dbReference>
<dbReference type="GO" id="GO:0009686">
    <property type="term" value="P:gibberellin biosynthetic process"/>
    <property type="evidence" value="ECO:0000315"/>
    <property type="project" value="TAIR"/>
</dbReference>
<dbReference type="GO" id="GO:0006783">
    <property type="term" value="P:heme biosynthetic process"/>
    <property type="evidence" value="ECO:0000315"/>
    <property type="project" value="TAIR"/>
</dbReference>
<dbReference type="GO" id="GO:0009959">
    <property type="term" value="P:negative gravitropism"/>
    <property type="evidence" value="ECO:0000315"/>
    <property type="project" value="TAIR"/>
</dbReference>
<dbReference type="GO" id="GO:0010100">
    <property type="term" value="P:negative regulation of photomorphogenesis"/>
    <property type="evidence" value="ECO:0000315"/>
    <property type="project" value="TAIR"/>
</dbReference>
<dbReference type="GO" id="GO:0010187">
    <property type="term" value="P:negative regulation of seed germination"/>
    <property type="evidence" value="ECO:0000315"/>
    <property type="project" value="TAIR"/>
</dbReference>
<dbReference type="GO" id="GO:0010161">
    <property type="term" value="P:red light signaling pathway"/>
    <property type="evidence" value="ECO:0000314"/>
    <property type="project" value="TAIR"/>
</dbReference>
<dbReference type="GO" id="GO:0006355">
    <property type="term" value="P:regulation of DNA-templated transcription"/>
    <property type="evidence" value="ECO:0000315"/>
    <property type="project" value="TAIR"/>
</dbReference>
<dbReference type="GO" id="GO:0010099">
    <property type="term" value="P:regulation of photomorphogenesis"/>
    <property type="evidence" value="ECO:0000304"/>
    <property type="project" value="TAIR"/>
</dbReference>
<dbReference type="GO" id="GO:0010029">
    <property type="term" value="P:regulation of seed germination"/>
    <property type="evidence" value="ECO:0000304"/>
    <property type="project" value="TAIR"/>
</dbReference>
<dbReference type="GO" id="GO:0009737">
    <property type="term" value="P:response to abscisic acid"/>
    <property type="evidence" value="ECO:0000270"/>
    <property type="project" value="UniProtKB"/>
</dbReference>
<dbReference type="GO" id="GO:0009733">
    <property type="term" value="P:response to auxin"/>
    <property type="evidence" value="ECO:0000270"/>
    <property type="project" value="UniProtKB"/>
</dbReference>
<dbReference type="GO" id="GO:0009409">
    <property type="term" value="P:response to cold"/>
    <property type="evidence" value="ECO:0000270"/>
    <property type="project" value="UniProtKB"/>
</dbReference>
<dbReference type="GO" id="GO:0009408">
    <property type="term" value="P:response to heat"/>
    <property type="evidence" value="ECO:0000270"/>
    <property type="project" value="UniProtKB"/>
</dbReference>
<dbReference type="CDD" id="cd11445">
    <property type="entry name" value="bHLH_AtPIF_like"/>
    <property type="match status" value="1"/>
</dbReference>
<dbReference type="FunFam" id="4.10.280.10:FF:000004">
    <property type="entry name" value="Basic helix-loop-helix transcription factor"/>
    <property type="match status" value="1"/>
</dbReference>
<dbReference type="Gene3D" id="4.10.280.10">
    <property type="entry name" value="Helix-loop-helix DNA-binding domain"/>
    <property type="match status" value="1"/>
</dbReference>
<dbReference type="InterPro" id="IPR011598">
    <property type="entry name" value="bHLH_dom"/>
</dbReference>
<dbReference type="InterPro" id="IPR036638">
    <property type="entry name" value="HLH_DNA-bd_sf"/>
</dbReference>
<dbReference type="InterPro" id="IPR047265">
    <property type="entry name" value="PIF1-like_bHLH"/>
</dbReference>
<dbReference type="InterPro" id="IPR044273">
    <property type="entry name" value="PIF3-like"/>
</dbReference>
<dbReference type="PANTHER" id="PTHR46807:SF8">
    <property type="entry name" value="TRANSCRIPTION FACTOR PIF1-LIKE ISOFORM X2"/>
    <property type="match status" value="1"/>
</dbReference>
<dbReference type="PANTHER" id="PTHR46807">
    <property type="entry name" value="TRANSCRIPTION FACTOR PIF3"/>
    <property type="match status" value="1"/>
</dbReference>
<dbReference type="Pfam" id="PF00010">
    <property type="entry name" value="HLH"/>
    <property type="match status" value="1"/>
</dbReference>
<dbReference type="SMART" id="SM00353">
    <property type="entry name" value="HLH"/>
    <property type="match status" value="1"/>
</dbReference>
<dbReference type="SUPFAM" id="SSF47459">
    <property type="entry name" value="HLH, helix-loop-helix DNA-binding domain"/>
    <property type="match status" value="1"/>
</dbReference>
<dbReference type="PROSITE" id="PS50888">
    <property type="entry name" value="BHLH"/>
    <property type="match status" value="1"/>
</dbReference>
<evidence type="ECO:0000255" key="1">
    <source>
        <dbReference type="PROSITE-ProRule" id="PRU00981"/>
    </source>
</evidence>
<evidence type="ECO:0000256" key="2">
    <source>
        <dbReference type="SAM" id="MobiDB-lite"/>
    </source>
</evidence>
<evidence type="ECO:0000269" key="3">
    <source>
    </source>
</evidence>
<evidence type="ECO:0000269" key="4">
    <source>
    </source>
</evidence>
<evidence type="ECO:0000269" key="5">
    <source>
    </source>
</evidence>
<evidence type="ECO:0000269" key="6">
    <source>
    </source>
</evidence>
<evidence type="ECO:0000269" key="7">
    <source>
    </source>
</evidence>
<evidence type="ECO:0000269" key="8">
    <source>
    </source>
</evidence>
<evidence type="ECO:0000269" key="9">
    <source>
    </source>
</evidence>
<evidence type="ECO:0000269" key="10">
    <source>
    </source>
</evidence>
<evidence type="ECO:0000269" key="11">
    <source>
    </source>
</evidence>
<evidence type="ECO:0000269" key="12">
    <source>
    </source>
</evidence>
<evidence type="ECO:0000269" key="13">
    <source>
    </source>
</evidence>
<evidence type="ECO:0000269" key="14">
    <source>
    </source>
</evidence>
<evidence type="ECO:0000269" key="15">
    <source>
    </source>
</evidence>
<evidence type="ECO:0000303" key="16">
    <source>
    </source>
</evidence>
<evidence type="ECO:0000303" key="17">
    <source>
    </source>
</evidence>
<evidence type="ECO:0000303" key="18">
    <source>
    </source>
</evidence>
<evidence type="ECO:0000303" key="19">
    <source>
    </source>
</evidence>
<evidence type="ECO:0000303" key="20">
    <source ref="5"/>
</evidence>
<evidence type="ECO:0000303" key="21">
    <source ref="6"/>
</evidence>
<evidence type="ECO:0000305" key="22"/>
<evidence type="ECO:0000312" key="23">
    <source>
        <dbReference type="Araport" id="AT2G20180"/>
    </source>
</evidence>
<evidence type="ECO:0000312" key="24">
    <source>
        <dbReference type="EMBL" id="AAD24380.1"/>
    </source>
</evidence>
<name>PIF1_ARATH</name>
<organism>
    <name type="scientific">Arabidopsis thaliana</name>
    <name type="common">Mouse-ear cress</name>
    <dbReference type="NCBI Taxonomy" id="3702"/>
    <lineage>
        <taxon>Eukaryota</taxon>
        <taxon>Viridiplantae</taxon>
        <taxon>Streptophyta</taxon>
        <taxon>Embryophyta</taxon>
        <taxon>Tracheophyta</taxon>
        <taxon>Spermatophyta</taxon>
        <taxon>Magnoliopsida</taxon>
        <taxon>eudicotyledons</taxon>
        <taxon>Gunneridae</taxon>
        <taxon>Pentapetalae</taxon>
        <taxon>rosids</taxon>
        <taxon>malvids</taxon>
        <taxon>Brassicales</taxon>
        <taxon>Brassicaceae</taxon>
        <taxon>Camelineae</taxon>
        <taxon>Arabidopsis</taxon>
    </lineage>
</organism>
<protein>
    <recommendedName>
        <fullName evidence="19">Transcription factor PIF1</fullName>
    </recommendedName>
    <alternativeName>
        <fullName evidence="16">Basic helix-loop-helix protein 15</fullName>
        <shortName evidence="16">AtbHLH15</shortName>
        <shortName evidence="16">bHLH 15</shortName>
    </alternativeName>
    <alternativeName>
        <fullName evidence="19">Phytochrome-interacting factor 1</fullName>
    </alternativeName>
    <alternativeName>
        <fullName evidence="17">Protein PHYTOCHROME INTERACTING FACTOR 3-LIKE 5</fullName>
    </alternativeName>
    <alternativeName>
        <fullName evidence="18">Transcription factor EN 101</fullName>
    </alternativeName>
    <alternativeName>
        <fullName evidence="16">bHLH transcription factor bHLH015</fullName>
    </alternativeName>
</protein>
<sequence length="478" mass="52864">MHHFVPDFDTDDDYVNNHNSSLNHLPRKSITTMGEDDDLMELLWQNGQVVVQNQRLHTKKPSSSPPKLLPSMDPQQQPSSDQNLFIQEDEMTSWLHYPLRDDDFCSDLLFSAAPTATATATVSQVTAARPPVSSTNESRPPVRNFMNFSRLRGDFNNGRGGESGPLLSKAVVRESTQVSPSATPSAAASESGLTRRTDGTDSSAVAGGGAYNRKGKAVAMTAPAIEITGTSSSVVSKSEIEPEKTNVDDRKRKEREATTTDETESRSEETKQARVSTTSTKRSRAAEVHNLSERKRRDRINERMKALQELIPRCNKSDKASMLDEAIEYMKSLQLQIQMMSMGCGMMPMMYPGMQQYMPHMAMGMGMNQPIPPPSFMPFPNMLAAQRPLPTQTHMAGSGPQYPVHASDPSRVFVPNQQYDPTSGQPQYPAGYTDPYQQFRGLHPTQPPQFQNQATSYPSSSRVSSSKESEDHGNHTTG</sequence>
<accession>Q8GZM7</accession>
<accession>Q0WQ83</accession>
<accession>Q3EBY0</accession>
<accession>Q9SL63</accession>